<accession>Q8CRQ3</accession>
<protein>
    <recommendedName>
        <fullName evidence="1">Protein SprT-like</fullName>
    </recommendedName>
</protein>
<feature type="chain" id="PRO_0000213302" description="Protein SprT-like">
    <location>
        <begin position="1"/>
        <end position="151"/>
    </location>
</feature>
<feature type="domain" description="SprT-like" evidence="1">
    <location>
        <begin position="7"/>
        <end position="146"/>
    </location>
</feature>
<feature type="active site" evidence="1">
    <location>
        <position position="68"/>
    </location>
</feature>
<feature type="binding site" evidence="1">
    <location>
        <position position="67"/>
    </location>
    <ligand>
        <name>Zn(2+)</name>
        <dbReference type="ChEBI" id="CHEBI:29105"/>
    </ligand>
</feature>
<feature type="binding site" evidence="1">
    <location>
        <position position="71"/>
    </location>
    <ligand>
        <name>Zn(2+)</name>
        <dbReference type="ChEBI" id="CHEBI:29105"/>
    </ligand>
</feature>
<dbReference type="EMBL" id="AE015929">
    <property type="protein sequence ID" value="AAO05265.1"/>
    <property type="molecule type" value="Genomic_DNA"/>
</dbReference>
<dbReference type="RefSeq" id="NP_765221.1">
    <property type="nucleotide sequence ID" value="NC_004461.1"/>
</dbReference>
<dbReference type="RefSeq" id="WP_001829897.1">
    <property type="nucleotide sequence ID" value="NZ_WBME01000071.1"/>
</dbReference>
<dbReference type="KEGG" id="sep:SE_1666"/>
<dbReference type="PATRIC" id="fig|176280.10.peg.1627"/>
<dbReference type="eggNOG" id="COG3091">
    <property type="taxonomic scope" value="Bacteria"/>
</dbReference>
<dbReference type="HOGENOM" id="CLU_123820_0_0_9"/>
<dbReference type="OrthoDB" id="9799909at2"/>
<dbReference type="Proteomes" id="UP000001411">
    <property type="component" value="Chromosome"/>
</dbReference>
<dbReference type="GO" id="GO:0005737">
    <property type="term" value="C:cytoplasm"/>
    <property type="evidence" value="ECO:0007669"/>
    <property type="project" value="UniProtKB-SubCell"/>
</dbReference>
<dbReference type="GO" id="GO:0008270">
    <property type="term" value="F:zinc ion binding"/>
    <property type="evidence" value="ECO:0007669"/>
    <property type="project" value="UniProtKB-UniRule"/>
</dbReference>
<dbReference type="GO" id="GO:0006950">
    <property type="term" value="P:response to stress"/>
    <property type="evidence" value="ECO:0007669"/>
    <property type="project" value="UniProtKB-ARBA"/>
</dbReference>
<dbReference type="HAMAP" id="MF_00745">
    <property type="entry name" value="SprT_like"/>
    <property type="match status" value="1"/>
</dbReference>
<dbReference type="InterPro" id="IPR006640">
    <property type="entry name" value="SprT-like_domain"/>
</dbReference>
<dbReference type="InterPro" id="IPR035240">
    <property type="entry name" value="SprT_Zn_ribbon"/>
</dbReference>
<dbReference type="InterPro" id="IPR023524">
    <property type="entry name" value="Uncharacterised_SprT-like"/>
</dbReference>
<dbReference type="NCBIfam" id="NF003339">
    <property type="entry name" value="PRK04351.1"/>
    <property type="match status" value="1"/>
</dbReference>
<dbReference type="Pfam" id="PF10263">
    <property type="entry name" value="SprT-like"/>
    <property type="match status" value="1"/>
</dbReference>
<dbReference type="Pfam" id="PF17283">
    <property type="entry name" value="Zn_ribbon_SprT"/>
    <property type="match status" value="1"/>
</dbReference>
<dbReference type="SMART" id="SM00731">
    <property type="entry name" value="SprT"/>
    <property type="match status" value="1"/>
</dbReference>
<gene>
    <name type="ordered locus">SE_1666</name>
</gene>
<name>SPRTL_STAES</name>
<keyword id="KW-0963">Cytoplasm</keyword>
<keyword id="KW-0479">Metal-binding</keyword>
<keyword id="KW-0862">Zinc</keyword>
<comment type="cofactor">
    <cofactor evidence="1">
        <name>Zn(2+)</name>
        <dbReference type="ChEBI" id="CHEBI:29105"/>
    </cofactor>
    <text evidence="1">Binds 1 zinc ion.</text>
</comment>
<comment type="subcellular location">
    <subcellularLocation>
        <location evidence="1">Cytoplasm</location>
    </subcellularLocation>
</comment>
<comment type="similarity">
    <text evidence="1">Belongs to the SprT family.</text>
</comment>
<sequence length="151" mass="17752">MNNLALQSLTESIAIKYFGKAFKHEVYYNKRLRTTGGRYILSSHNIEINPKQYEMFGEKAVIDIIKHELCHYFLHLAGEGYQHRDKAFKSLSAKVGAPRFCTPTESYQDRANYKYRCIYCEQEFIRIKRVNLEKMRCGRCGGILKLLQTRK</sequence>
<evidence type="ECO:0000255" key="1">
    <source>
        <dbReference type="HAMAP-Rule" id="MF_00745"/>
    </source>
</evidence>
<organism>
    <name type="scientific">Staphylococcus epidermidis (strain ATCC 12228 / FDA PCI 1200)</name>
    <dbReference type="NCBI Taxonomy" id="176280"/>
    <lineage>
        <taxon>Bacteria</taxon>
        <taxon>Bacillati</taxon>
        <taxon>Bacillota</taxon>
        <taxon>Bacilli</taxon>
        <taxon>Bacillales</taxon>
        <taxon>Staphylococcaceae</taxon>
        <taxon>Staphylococcus</taxon>
    </lineage>
</organism>
<proteinExistence type="inferred from homology"/>
<reference key="1">
    <citation type="journal article" date="2003" name="Mol. Microbiol.">
        <title>Genome-based analysis of virulence genes in a non-biofilm-forming Staphylococcus epidermidis strain (ATCC 12228).</title>
        <authorList>
            <person name="Zhang Y.-Q."/>
            <person name="Ren S.-X."/>
            <person name="Li H.-L."/>
            <person name="Wang Y.-X."/>
            <person name="Fu G."/>
            <person name="Yang J."/>
            <person name="Qin Z.-Q."/>
            <person name="Miao Y.-G."/>
            <person name="Wang W.-Y."/>
            <person name="Chen R.-S."/>
            <person name="Shen Y."/>
            <person name="Chen Z."/>
            <person name="Yuan Z.-H."/>
            <person name="Zhao G.-P."/>
            <person name="Qu D."/>
            <person name="Danchin A."/>
            <person name="Wen Y.-M."/>
        </authorList>
    </citation>
    <scope>NUCLEOTIDE SEQUENCE [LARGE SCALE GENOMIC DNA]</scope>
    <source>
        <strain>ATCC 12228 / FDA PCI 1200</strain>
    </source>
</reference>